<protein>
    <recommendedName>
        <fullName evidence="1">7-methyl-GTP pyrophosphatase</fullName>
        <shortName evidence="1">m(7)GTP pyrophosphatase</shortName>
        <ecNumber evidence="1">3.6.1.-</ecNumber>
    </recommendedName>
</protein>
<gene>
    <name type="ordered locus">mlr4491</name>
</gene>
<dbReference type="EC" id="3.6.1.-" evidence="1"/>
<dbReference type="EMBL" id="BA000012">
    <property type="protein sequence ID" value="BAB51136.1"/>
    <property type="molecule type" value="Genomic_DNA"/>
</dbReference>
<dbReference type="RefSeq" id="WP_010912478.1">
    <property type="nucleotide sequence ID" value="NC_002678.2"/>
</dbReference>
<dbReference type="SMR" id="Q98DY4"/>
<dbReference type="KEGG" id="mlo:mlr4491"/>
<dbReference type="PATRIC" id="fig|266835.9.peg.3549"/>
<dbReference type="eggNOG" id="COG0424">
    <property type="taxonomic scope" value="Bacteria"/>
</dbReference>
<dbReference type="HOGENOM" id="CLU_040416_1_1_5"/>
<dbReference type="Proteomes" id="UP000000552">
    <property type="component" value="Chromosome"/>
</dbReference>
<dbReference type="GO" id="GO:0005737">
    <property type="term" value="C:cytoplasm"/>
    <property type="evidence" value="ECO:0007669"/>
    <property type="project" value="UniProtKB-SubCell"/>
</dbReference>
<dbReference type="GO" id="GO:0047429">
    <property type="term" value="F:nucleoside triphosphate diphosphatase activity"/>
    <property type="evidence" value="ECO:0007669"/>
    <property type="project" value="InterPro"/>
</dbReference>
<dbReference type="GO" id="GO:0009117">
    <property type="term" value="P:nucleotide metabolic process"/>
    <property type="evidence" value="ECO:0007669"/>
    <property type="project" value="UniProtKB-KW"/>
</dbReference>
<dbReference type="CDD" id="cd00555">
    <property type="entry name" value="Maf"/>
    <property type="match status" value="1"/>
</dbReference>
<dbReference type="Gene3D" id="3.90.950.10">
    <property type="match status" value="1"/>
</dbReference>
<dbReference type="HAMAP" id="MF_00528">
    <property type="entry name" value="Maf"/>
    <property type="match status" value="1"/>
</dbReference>
<dbReference type="InterPro" id="IPR029001">
    <property type="entry name" value="ITPase-like_fam"/>
</dbReference>
<dbReference type="InterPro" id="IPR003697">
    <property type="entry name" value="Maf-like"/>
</dbReference>
<dbReference type="NCBIfam" id="NF002690">
    <property type="entry name" value="PRK02478.1"/>
    <property type="match status" value="1"/>
</dbReference>
<dbReference type="PANTHER" id="PTHR43213">
    <property type="entry name" value="BIFUNCTIONAL DTTP/UTP PYROPHOSPHATASE/METHYLTRANSFERASE PROTEIN-RELATED"/>
    <property type="match status" value="1"/>
</dbReference>
<dbReference type="PANTHER" id="PTHR43213:SF5">
    <property type="entry name" value="BIFUNCTIONAL DTTP_UTP PYROPHOSPHATASE_METHYLTRANSFERASE PROTEIN-RELATED"/>
    <property type="match status" value="1"/>
</dbReference>
<dbReference type="Pfam" id="PF02545">
    <property type="entry name" value="Maf"/>
    <property type="match status" value="1"/>
</dbReference>
<dbReference type="PIRSF" id="PIRSF006305">
    <property type="entry name" value="Maf"/>
    <property type="match status" value="1"/>
</dbReference>
<dbReference type="SUPFAM" id="SSF52972">
    <property type="entry name" value="ITPase-like"/>
    <property type="match status" value="1"/>
</dbReference>
<proteinExistence type="inferred from homology"/>
<organism>
    <name type="scientific">Mesorhizobium japonicum (strain LMG 29417 / CECT 9101 / MAFF 303099)</name>
    <name type="common">Mesorhizobium loti (strain MAFF 303099)</name>
    <dbReference type="NCBI Taxonomy" id="266835"/>
    <lineage>
        <taxon>Bacteria</taxon>
        <taxon>Pseudomonadati</taxon>
        <taxon>Pseudomonadota</taxon>
        <taxon>Alphaproteobacteria</taxon>
        <taxon>Hyphomicrobiales</taxon>
        <taxon>Phyllobacteriaceae</taxon>
        <taxon>Mesorhizobium</taxon>
    </lineage>
</organism>
<accession>Q98DY4</accession>
<feature type="chain" id="PRO_0000123052" description="7-methyl-GTP pyrophosphatase">
    <location>
        <begin position="1"/>
        <end position="199"/>
    </location>
</feature>
<feature type="active site" description="Proton acceptor" evidence="1">
    <location>
        <position position="76"/>
    </location>
</feature>
<feature type="site" description="Important for substrate specificity" evidence="1">
    <location>
        <position position="13"/>
    </location>
</feature>
<feature type="site" description="Important for substrate specificity" evidence="1">
    <location>
        <position position="77"/>
    </location>
</feature>
<feature type="site" description="Important for substrate specificity" evidence="1">
    <location>
        <position position="162"/>
    </location>
</feature>
<reference key="1">
    <citation type="journal article" date="2000" name="DNA Res.">
        <title>Complete genome structure of the nitrogen-fixing symbiotic bacterium Mesorhizobium loti.</title>
        <authorList>
            <person name="Kaneko T."/>
            <person name="Nakamura Y."/>
            <person name="Sato S."/>
            <person name="Asamizu E."/>
            <person name="Kato T."/>
            <person name="Sasamoto S."/>
            <person name="Watanabe A."/>
            <person name="Idesawa K."/>
            <person name="Ishikawa A."/>
            <person name="Kawashima K."/>
            <person name="Kimura T."/>
            <person name="Kishida Y."/>
            <person name="Kiyokawa C."/>
            <person name="Kohara M."/>
            <person name="Matsumoto M."/>
            <person name="Matsuno A."/>
            <person name="Mochizuki Y."/>
            <person name="Nakayama S."/>
            <person name="Nakazaki N."/>
            <person name="Shimpo S."/>
            <person name="Sugimoto M."/>
            <person name="Takeuchi C."/>
            <person name="Yamada M."/>
            <person name="Tabata S."/>
        </authorList>
    </citation>
    <scope>NUCLEOTIDE SEQUENCE [LARGE SCALE GENOMIC DNA]</scope>
    <source>
        <strain>LMG 29417 / CECT 9101 / MAFF 303099</strain>
    </source>
</reference>
<keyword id="KW-0963">Cytoplasm</keyword>
<keyword id="KW-0378">Hydrolase</keyword>
<keyword id="KW-0546">Nucleotide metabolism</keyword>
<name>NTPPB_RHILO</name>
<comment type="function">
    <text evidence="1">Nucleoside triphosphate pyrophosphatase that hydrolyzes 7-methyl-GTP (m(7)GTP). May have a dual role in cell division arrest and in preventing the incorporation of modified nucleotides into cellular nucleic acids.</text>
</comment>
<comment type="catalytic activity">
    <reaction evidence="1">
        <text>N(7)-methyl-GTP + H2O = N(7)-methyl-GMP + diphosphate + H(+)</text>
        <dbReference type="Rhea" id="RHEA:58744"/>
        <dbReference type="ChEBI" id="CHEBI:15377"/>
        <dbReference type="ChEBI" id="CHEBI:15378"/>
        <dbReference type="ChEBI" id="CHEBI:33019"/>
        <dbReference type="ChEBI" id="CHEBI:58285"/>
        <dbReference type="ChEBI" id="CHEBI:87133"/>
    </reaction>
</comment>
<comment type="cofactor">
    <cofactor evidence="1">
        <name>a divalent metal cation</name>
        <dbReference type="ChEBI" id="CHEBI:60240"/>
    </cofactor>
</comment>
<comment type="subcellular location">
    <subcellularLocation>
        <location evidence="1">Cytoplasm</location>
    </subcellularLocation>
</comment>
<comment type="similarity">
    <text evidence="1">Belongs to the Maf family. YceF subfamily.</text>
</comment>
<evidence type="ECO:0000255" key="1">
    <source>
        <dbReference type="HAMAP-Rule" id="MF_00528"/>
    </source>
</evidence>
<sequence>MTEKIILASGSPFRKAMLINAGLDVEAVPADVDERALEAPLQDSGVSPEDVALVLAEAKATEVSERRPGALVLGCDQTLSLGDEVFHKPADMEGARRHLLALSGRTHQLNSAAVLVRDGKVLWRHVGIAGMTMRMLDPGFIGRHLALVGAKALASVGAYQIEGEGIQLFEKIEGDYFTIVGLPLLPLLAELRTLGAIDG</sequence>